<gene>
    <name type="ordered locus">Rpal_3584</name>
</gene>
<feature type="chain" id="PRO_0000364080" description="Oxaloacetate decarboxylase">
    <location>
        <begin position="1"/>
        <end position="288"/>
    </location>
</feature>
<feature type="binding site" evidence="1">
    <location>
        <position position="47"/>
    </location>
    <ligand>
        <name>substrate</name>
    </ligand>
</feature>
<feature type="binding site" evidence="1">
    <location>
        <position position="85"/>
    </location>
    <ligand>
        <name>Mg(2+)</name>
        <dbReference type="ChEBI" id="CHEBI:18420"/>
    </ligand>
</feature>
<feature type="binding site" evidence="1">
    <location>
        <position position="156"/>
    </location>
    <ligand>
        <name>substrate</name>
    </ligand>
</feature>
<feature type="binding site" evidence="1">
    <location>
        <position position="232"/>
    </location>
    <ligand>
        <name>substrate</name>
    </ligand>
</feature>
<comment type="function">
    <text evidence="1">Catalyzes the decarboxylation of oxaloacetate into pyruvate. Seems to play a role in maintaining cellular concentrations of bicarbonate and pyruvate.</text>
</comment>
<comment type="catalytic activity">
    <reaction evidence="1">
        <text>oxaloacetate + H(+) = pyruvate + CO2</text>
        <dbReference type="Rhea" id="RHEA:15641"/>
        <dbReference type="ChEBI" id="CHEBI:15361"/>
        <dbReference type="ChEBI" id="CHEBI:15378"/>
        <dbReference type="ChEBI" id="CHEBI:16452"/>
        <dbReference type="ChEBI" id="CHEBI:16526"/>
        <dbReference type="EC" id="4.1.1.112"/>
    </reaction>
</comment>
<comment type="cofactor">
    <cofactor evidence="1">
        <name>Mg(2+)</name>
        <dbReference type="ChEBI" id="CHEBI:18420"/>
    </cofactor>
    <text evidence="1">Binds 1 Mg(2+) ion per subunit.</text>
</comment>
<comment type="subunit">
    <text evidence="1">Homotetramer; dimer of dimers.</text>
</comment>
<comment type="similarity">
    <text evidence="2">Belongs to the isocitrate lyase/PEP mutase superfamily. Oxaloacetate decarboxylase family.</text>
</comment>
<proteinExistence type="inferred from homology"/>
<sequence length="288" mass="30162">MAWRDRRGALRAILTGSACVRPASVYDAISIRIADDLGFPFGMFGGSVASLAILGDPDIALITLTELAEQVRRMSRAAALPVVVDADHGYGNALNVRRTVEELEAAGAAGLTIEDTLLPQAYGEAKPQLVSREEGLGKITAALDARRDPNLVIIGRTGACSITSLDDAIERALAYQAAGVDALFFTGVKTRAQLEAISAATTLPIALGSPPAELGDFDHLAERRVRIAVQGHAPIAAATEAVFKTLSAIKDGAAPKALTGLASAELMDKVTRADVVAERGEHFLGVKR</sequence>
<protein>
    <recommendedName>
        <fullName evidence="1">Oxaloacetate decarboxylase</fullName>
        <ecNumber evidence="1">4.1.1.112</ecNumber>
    </recommendedName>
</protein>
<keyword id="KW-0210">Decarboxylase</keyword>
<keyword id="KW-0456">Lyase</keyword>
<keyword id="KW-0460">Magnesium</keyword>
<keyword id="KW-0479">Metal-binding</keyword>
<name>OADC_RHOPT</name>
<reference key="1">
    <citation type="submission" date="2008-05" db="EMBL/GenBank/DDBJ databases">
        <title>Complete sequence of Rhodopseudomonas palustris TIE-1.</title>
        <authorList>
            <consortium name="US DOE Joint Genome Institute"/>
            <person name="Lucas S."/>
            <person name="Copeland A."/>
            <person name="Lapidus A."/>
            <person name="Glavina del Rio T."/>
            <person name="Dalin E."/>
            <person name="Tice H."/>
            <person name="Pitluck S."/>
            <person name="Chain P."/>
            <person name="Malfatti S."/>
            <person name="Shin M."/>
            <person name="Vergez L."/>
            <person name="Lang D."/>
            <person name="Schmutz J."/>
            <person name="Larimer F."/>
            <person name="Land M."/>
            <person name="Hauser L."/>
            <person name="Kyrpides N."/>
            <person name="Mikhailova N."/>
            <person name="Emerson D."/>
            <person name="Newman D.K."/>
            <person name="Roden E."/>
            <person name="Richardson P."/>
        </authorList>
    </citation>
    <scope>NUCLEOTIDE SEQUENCE [LARGE SCALE GENOMIC DNA]</scope>
    <source>
        <strain>TIE-1</strain>
    </source>
</reference>
<organism>
    <name type="scientific">Rhodopseudomonas palustris (strain TIE-1)</name>
    <dbReference type="NCBI Taxonomy" id="395960"/>
    <lineage>
        <taxon>Bacteria</taxon>
        <taxon>Pseudomonadati</taxon>
        <taxon>Pseudomonadota</taxon>
        <taxon>Alphaproteobacteria</taxon>
        <taxon>Hyphomicrobiales</taxon>
        <taxon>Nitrobacteraceae</taxon>
        <taxon>Rhodopseudomonas</taxon>
    </lineage>
</organism>
<accession>B3QAW1</accession>
<dbReference type="EC" id="4.1.1.112" evidence="1"/>
<dbReference type="EMBL" id="CP001096">
    <property type="protein sequence ID" value="ACF02084.1"/>
    <property type="molecule type" value="Genomic_DNA"/>
</dbReference>
<dbReference type="RefSeq" id="WP_012496597.1">
    <property type="nucleotide sequence ID" value="NC_011004.1"/>
</dbReference>
<dbReference type="SMR" id="B3QAW1"/>
<dbReference type="KEGG" id="rpt:Rpal_3584"/>
<dbReference type="HOGENOM" id="CLU_027389_3_2_5"/>
<dbReference type="OrthoDB" id="9771433at2"/>
<dbReference type="Proteomes" id="UP000001725">
    <property type="component" value="Chromosome"/>
</dbReference>
<dbReference type="GO" id="GO:0000287">
    <property type="term" value="F:magnesium ion binding"/>
    <property type="evidence" value="ECO:0007669"/>
    <property type="project" value="UniProtKB-UniRule"/>
</dbReference>
<dbReference type="GO" id="GO:0046421">
    <property type="term" value="F:methylisocitrate lyase activity"/>
    <property type="evidence" value="ECO:0007669"/>
    <property type="project" value="TreeGrafter"/>
</dbReference>
<dbReference type="GO" id="GO:0008948">
    <property type="term" value="F:oxaloacetate decarboxylase activity"/>
    <property type="evidence" value="ECO:0007669"/>
    <property type="project" value="UniProtKB-UniRule"/>
</dbReference>
<dbReference type="GO" id="GO:0006107">
    <property type="term" value="P:oxaloacetate metabolic process"/>
    <property type="evidence" value="ECO:0007669"/>
    <property type="project" value="UniProtKB-UniRule"/>
</dbReference>
<dbReference type="GO" id="GO:0019629">
    <property type="term" value="P:propionate catabolic process, 2-methylcitrate cycle"/>
    <property type="evidence" value="ECO:0007669"/>
    <property type="project" value="TreeGrafter"/>
</dbReference>
<dbReference type="GO" id="GO:0042866">
    <property type="term" value="P:pyruvate biosynthetic process"/>
    <property type="evidence" value="ECO:0007669"/>
    <property type="project" value="UniProtKB-UniRule"/>
</dbReference>
<dbReference type="CDD" id="cd00377">
    <property type="entry name" value="ICL_PEPM"/>
    <property type="match status" value="1"/>
</dbReference>
<dbReference type="Gene3D" id="3.20.20.60">
    <property type="entry name" value="Phosphoenolpyruvate-binding domains"/>
    <property type="match status" value="1"/>
</dbReference>
<dbReference type="HAMAP" id="MF_01299">
    <property type="entry name" value="OadC"/>
    <property type="match status" value="1"/>
</dbReference>
<dbReference type="InterPro" id="IPR039556">
    <property type="entry name" value="ICL/PEPM"/>
</dbReference>
<dbReference type="InterPro" id="IPR023687">
    <property type="entry name" value="Oxaloacetate_deCOase_bac"/>
</dbReference>
<dbReference type="InterPro" id="IPR015813">
    <property type="entry name" value="Pyrv/PenolPyrv_kinase-like_dom"/>
</dbReference>
<dbReference type="InterPro" id="IPR040442">
    <property type="entry name" value="Pyrv_kinase-like_dom_sf"/>
</dbReference>
<dbReference type="PANTHER" id="PTHR42905:SF3">
    <property type="entry name" value="OXALOACETATE DECARBOXYLASE"/>
    <property type="match status" value="1"/>
</dbReference>
<dbReference type="PANTHER" id="PTHR42905">
    <property type="entry name" value="PHOSPHOENOLPYRUVATE CARBOXYLASE"/>
    <property type="match status" value="1"/>
</dbReference>
<dbReference type="Pfam" id="PF13714">
    <property type="entry name" value="PEP_mutase"/>
    <property type="match status" value="1"/>
</dbReference>
<dbReference type="SUPFAM" id="SSF51621">
    <property type="entry name" value="Phosphoenolpyruvate/pyruvate domain"/>
    <property type="match status" value="1"/>
</dbReference>
<evidence type="ECO:0000255" key="1">
    <source>
        <dbReference type="HAMAP-Rule" id="MF_01299"/>
    </source>
</evidence>
<evidence type="ECO:0000305" key="2"/>